<protein>
    <recommendedName>
        <fullName evidence="1">33 kDa chaperonin</fullName>
    </recommendedName>
    <alternativeName>
        <fullName evidence="1">Heat shock protein 33 homolog</fullName>
        <shortName evidence="1">HSP33</shortName>
    </alternativeName>
</protein>
<keyword id="KW-0143">Chaperone</keyword>
<keyword id="KW-0963">Cytoplasm</keyword>
<keyword id="KW-1015">Disulfide bond</keyword>
<keyword id="KW-0676">Redox-active center</keyword>
<keyword id="KW-0862">Zinc</keyword>
<dbReference type="EMBL" id="CP000962">
    <property type="protein sequence ID" value="ACA53910.1"/>
    <property type="molecule type" value="Genomic_DNA"/>
</dbReference>
<dbReference type="RefSeq" id="WP_012342084.1">
    <property type="nucleotide sequence ID" value="NC_010520.1"/>
</dbReference>
<dbReference type="SMR" id="B1L0U2"/>
<dbReference type="KEGG" id="cbl:CLK_2540"/>
<dbReference type="HOGENOM" id="CLU_054493_1_0_9"/>
<dbReference type="GO" id="GO:0005737">
    <property type="term" value="C:cytoplasm"/>
    <property type="evidence" value="ECO:0007669"/>
    <property type="project" value="UniProtKB-SubCell"/>
</dbReference>
<dbReference type="GO" id="GO:0044183">
    <property type="term" value="F:protein folding chaperone"/>
    <property type="evidence" value="ECO:0007669"/>
    <property type="project" value="TreeGrafter"/>
</dbReference>
<dbReference type="GO" id="GO:0051082">
    <property type="term" value="F:unfolded protein binding"/>
    <property type="evidence" value="ECO:0007669"/>
    <property type="project" value="UniProtKB-UniRule"/>
</dbReference>
<dbReference type="GO" id="GO:0042026">
    <property type="term" value="P:protein refolding"/>
    <property type="evidence" value="ECO:0007669"/>
    <property type="project" value="TreeGrafter"/>
</dbReference>
<dbReference type="CDD" id="cd00498">
    <property type="entry name" value="Hsp33"/>
    <property type="match status" value="1"/>
</dbReference>
<dbReference type="Gene3D" id="3.55.30.10">
    <property type="entry name" value="Hsp33 domain"/>
    <property type="match status" value="1"/>
</dbReference>
<dbReference type="Gene3D" id="3.90.1280.10">
    <property type="entry name" value="HSP33 redox switch-like"/>
    <property type="match status" value="1"/>
</dbReference>
<dbReference type="HAMAP" id="MF_00117">
    <property type="entry name" value="HslO"/>
    <property type="match status" value="1"/>
</dbReference>
<dbReference type="InterPro" id="IPR000397">
    <property type="entry name" value="Heat_shock_Hsp33"/>
</dbReference>
<dbReference type="InterPro" id="IPR016154">
    <property type="entry name" value="Heat_shock_Hsp33_C"/>
</dbReference>
<dbReference type="InterPro" id="IPR016153">
    <property type="entry name" value="Heat_shock_Hsp33_N"/>
</dbReference>
<dbReference type="NCBIfam" id="NF001033">
    <property type="entry name" value="PRK00114.1"/>
    <property type="match status" value="1"/>
</dbReference>
<dbReference type="PANTHER" id="PTHR30111">
    <property type="entry name" value="33 KDA CHAPERONIN"/>
    <property type="match status" value="1"/>
</dbReference>
<dbReference type="PANTHER" id="PTHR30111:SF1">
    <property type="entry name" value="33 KDA CHAPERONIN"/>
    <property type="match status" value="1"/>
</dbReference>
<dbReference type="Pfam" id="PF01430">
    <property type="entry name" value="HSP33"/>
    <property type="match status" value="1"/>
</dbReference>
<dbReference type="PIRSF" id="PIRSF005261">
    <property type="entry name" value="Heat_shock_Hsp33"/>
    <property type="match status" value="1"/>
</dbReference>
<dbReference type="SUPFAM" id="SSF64397">
    <property type="entry name" value="Hsp33 domain"/>
    <property type="match status" value="1"/>
</dbReference>
<dbReference type="SUPFAM" id="SSF118352">
    <property type="entry name" value="HSP33 redox switch-like"/>
    <property type="match status" value="1"/>
</dbReference>
<accession>B1L0U2</accession>
<sequence length="296" mass="32131">MKDKLVKAIAKDGQVRIIGAITTELVNEGVKLHNCAPTAAAALGRMLTAGALMGTTLKSGKDTLTLQIHGGGIAKGVVVTSYADGHVKGYIGNPTADIDPNSKGKLDVSGIIGKNGNLLVIRDMGLKEPYIGQVPIYTGEIGEDLAYYYTVSEQTPSAVGLGVLVDKDLSIKSAGGFIIQMMPGADEMLADLISYRLEEIPSITEMISKGMTIEEILEYIFEDMDLKILESIAPEYRCDCSREKVERAFASIGQKDLKEIYDEGKEEELKCHFCNKAYAFSHDEVGDILESYYSEK</sequence>
<organism>
    <name type="scientific">Clostridium botulinum (strain Loch Maree / Type A3)</name>
    <dbReference type="NCBI Taxonomy" id="498214"/>
    <lineage>
        <taxon>Bacteria</taxon>
        <taxon>Bacillati</taxon>
        <taxon>Bacillota</taxon>
        <taxon>Clostridia</taxon>
        <taxon>Eubacteriales</taxon>
        <taxon>Clostridiaceae</taxon>
        <taxon>Clostridium</taxon>
    </lineage>
</organism>
<name>HSLO_CLOBM</name>
<proteinExistence type="inferred from homology"/>
<evidence type="ECO:0000255" key="1">
    <source>
        <dbReference type="HAMAP-Rule" id="MF_00117"/>
    </source>
</evidence>
<reference key="1">
    <citation type="journal article" date="2007" name="PLoS ONE">
        <title>Analysis of the neurotoxin complex genes in Clostridium botulinum A1-A4 and B1 strains: BoNT/A3, /Ba4 and /B1 clusters are located within plasmids.</title>
        <authorList>
            <person name="Smith T.J."/>
            <person name="Hill K.K."/>
            <person name="Foley B.T."/>
            <person name="Detter J.C."/>
            <person name="Munk A.C."/>
            <person name="Bruce D.C."/>
            <person name="Doggett N.A."/>
            <person name="Smith L.A."/>
            <person name="Marks J.D."/>
            <person name="Xie G."/>
            <person name="Brettin T.S."/>
        </authorList>
    </citation>
    <scope>NUCLEOTIDE SEQUENCE [LARGE SCALE GENOMIC DNA]</scope>
    <source>
        <strain>Loch Maree / Type A3</strain>
    </source>
</reference>
<feature type="chain" id="PRO_1000095015" description="33 kDa chaperonin">
    <location>
        <begin position="1"/>
        <end position="296"/>
    </location>
</feature>
<feature type="disulfide bond" description="Redox-active" evidence="1">
    <location>
        <begin position="238"/>
        <end position="240"/>
    </location>
</feature>
<feature type="disulfide bond" description="Redox-active" evidence="1">
    <location>
        <begin position="271"/>
        <end position="274"/>
    </location>
</feature>
<comment type="function">
    <text evidence="1">Redox regulated molecular chaperone. Protects both thermally unfolding and oxidatively damaged proteins from irreversible aggregation. Plays an important role in the bacterial defense system toward oxidative stress.</text>
</comment>
<comment type="subcellular location">
    <subcellularLocation>
        <location evidence="1">Cytoplasm</location>
    </subcellularLocation>
</comment>
<comment type="PTM">
    <text evidence="1">Under oxidizing conditions two disulfide bonds are formed involving the reactive cysteines. Under reducing conditions zinc is bound to the reactive cysteines and the protein is inactive.</text>
</comment>
<comment type="similarity">
    <text evidence="1">Belongs to the HSP33 family.</text>
</comment>
<gene>
    <name evidence="1" type="primary">hslO</name>
    <name type="ordered locus">CLK_2540</name>
</gene>